<proteinExistence type="evidence at protein level"/>
<protein>
    <recommendedName>
        <fullName evidence="2">Esculentin-1GRa</fullName>
    </recommendedName>
</protein>
<comment type="function">
    <text evidence="1">Antimicrobial peptide active against the Gram-positive bacterium S.aureus (MIC=12.5 uM) and against the Gram-negative bacterium E.coli (MIC=6 uM). Has no antifungal activity against C.albicans. Shows hemolytic activity against human erythrocytes only at high concentrations (LC(50)=210 uM).</text>
</comment>
<comment type="subcellular location">
    <subcellularLocation>
        <location evidence="1">Secreted</location>
    </subcellularLocation>
</comment>
<comment type="tissue specificity">
    <text evidence="4">Expressed by the skin glands.</text>
</comment>
<comment type="mass spectrometry" mass="4858.1" method="MALDI" evidence="1"/>
<comment type="similarity">
    <text evidence="3">Belongs to the frog skin active peptide (FSAP) family. Esculentin subfamily.</text>
</comment>
<keyword id="KW-0044">Antibiotic</keyword>
<keyword id="KW-0929">Antimicrobial</keyword>
<keyword id="KW-0903">Direct protein sequencing</keyword>
<keyword id="KW-0964">Secreted</keyword>
<accession>C0HL68</accession>
<sequence length="46" mass="4864">GLFSKFAGKGIKNLIFKGVKHIGKEVGMDVIRTGIDVAGCKIKGEC</sequence>
<dbReference type="GO" id="GO:0005576">
    <property type="term" value="C:extracellular region"/>
    <property type="evidence" value="ECO:0007669"/>
    <property type="project" value="UniProtKB-SubCell"/>
</dbReference>
<dbReference type="GO" id="GO:0050829">
    <property type="term" value="P:defense response to Gram-negative bacterium"/>
    <property type="evidence" value="ECO:0000314"/>
    <property type="project" value="UniProtKB"/>
</dbReference>
<dbReference type="GO" id="GO:0050830">
    <property type="term" value="P:defense response to Gram-positive bacterium"/>
    <property type="evidence" value="ECO:0000314"/>
    <property type="project" value="UniProtKB"/>
</dbReference>
<dbReference type="GO" id="GO:0031640">
    <property type="term" value="P:killing of cells of another organism"/>
    <property type="evidence" value="ECO:0000314"/>
    <property type="project" value="UniProtKB"/>
</dbReference>
<dbReference type="InterPro" id="IPR012521">
    <property type="entry name" value="Antimicrobial_frog_2"/>
</dbReference>
<dbReference type="Pfam" id="PF08023">
    <property type="entry name" value="Antimicrobial_2"/>
    <property type="match status" value="1"/>
</dbReference>
<evidence type="ECO:0000269" key="1">
    <source>
    </source>
</evidence>
<evidence type="ECO:0000303" key="2">
    <source>
    </source>
</evidence>
<evidence type="ECO:0000305" key="3"/>
<evidence type="ECO:0000305" key="4">
    <source>
    </source>
</evidence>
<organism>
    <name type="scientific">Odorrana grahami</name>
    <name type="common">Yunnanfu frog</name>
    <name type="synonym">Rana grahami</name>
    <dbReference type="NCBI Taxonomy" id="167935"/>
    <lineage>
        <taxon>Eukaryota</taxon>
        <taxon>Metazoa</taxon>
        <taxon>Chordata</taxon>
        <taxon>Craniata</taxon>
        <taxon>Vertebrata</taxon>
        <taxon>Euteleostomi</taxon>
        <taxon>Amphibia</taxon>
        <taxon>Batrachia</taxon>
        <taxon>Anura</taxon>
        <taxon>Neobatrachia</taxon>
        <taxon>Ranoidea</taxon>
        <taxon>Ranidae</taxon>
        <taxon>Odorrana</taxon>
    </lineage>
</organism>
<feature type="peptide" id="PRO_0000443435" description="Esculentin-1GRa" evidence="1">
    <location>
        <begin position="1"/>
        <end position="46"/>
    </location>
</feature>
<name>ES1GA_ODOGR</name>
<reference evidence="3" key="1">
    <citation type="journal article" date="2006" name="Peptides">
        <title>Antimicrobial peptides from diverse families isolated from the skin of the Asian frog, Rana grahami.</title>
        <authorList>
            <person name="Conlon J.M."/>
            <person name="Al-Ghaferi N."/>
            <person name="Abraham B."/>
            <person name="Jiansheng H."/>
            <person name="Cosette P."/>
            <person name="Leprince J."/>
            <person name="Jouenne T."/>
            <person name="Vaudry H."/>
        </authorList>
    </citation>
    <scope>PROTEIN SEQUENCE</scope>
    <scope>FUNCTION</scope>
    <scope>MASS SPECTROMETRY</scope>
    <scope>SUBCELLULAR LOCATION</scope>
    <source>
        <tissue evidence="2">Skin</tissue>
    </source>
</reference>